<keyword id="KW-0067">ATP-binding</keyword>
<keyword id="KW-0963">Cytoplasm</keyword>
<keyword id="KW-0460">Magnesium</keyword>
<keyword id="KW-0479">Metal-binding</keyword>
<keyword id="KW-0547">Nucleotide-binding</keyword>
<keyword id="KW-0554">One-carbon metabolism</keyword>
<keyword id="KW-0630">Potassium</keyword>
<keyword id="KW-0808">Transferase</keyword>
<comment type="function">
    <text evidence="1">Catalyzes the formation of S-adenosylmethionine (AdoMet) from methionine and ATP. The overall synthetic reaction is composed of two sequential steps, AdoMet formation and the subsequent tripolyphosphate hydrolysis which occurs prior to release of AdoMet from the enzyme.</text>
</comment>
<comment type="catalytic activity">
    <reaction evidence="1">
        <text>L-methionine + ATP + H2O = S-adenosyl-L-methionine + phosphate + diphosphate</text>
        <dbReference type="Rhea" id="RHEA:21080"/>
        <dbReference type="ChEBI" id="CHEBI:15377"/>
        <dbReference type="ChEBI" id="CHEBI:30616"/>
        <dbReference type="ChEBI" id="CHEBI:33019"/>
        <dbReference type="ChEBI" id="CHEBI:43474"/>
        <dbReference type="ChEBI" id="CHEBI:57844"/>
        <dbReference type="ChEBI" id="CHEBI:59789"/>
        <dbReference type="EC" id="2.5.1.6"/>
    </reaction>
</comment>
<comment type="cofactor">
    <cofactor evidence="1">
        <name>Mg(2+)</name>
        <dbReference type="ChEBI" id="CHEBI:18420"/>
    </cofactor>
    <text evidence="1">Binds 2 divalent ions per subunit.</text>
</comment>
<comment type="cofactor">
    <cofactor evidence="1">
        <name>K(+)</name>
        <dbReference type="ChEBI" id="CHEBI:29103"/>
    </cofactor>
    <text evidence="1">Binds 1 potassium ion per subunit.</text>
</comment>
<comment type="pathway">
    <text evidence="1">Amino-acid biosynthesis; S-adenosyl-L-methionine biosynthesis; S-adenosyl-L-methionine from L-methionine: step 1/1.</text>
</comment>
<comment type="subunit">
    <text evidence="1">Homotetramer; dimer of dimers.</text>
</comment>
<comment type="subcellular location">
    <subcellularLocation>
        <location evidence="1">Cytoplasm</location>
    </subcellularLocation>
</comment>
<comment type="similarity">
    <text evidence="1">Belongs to the AdoMet synthase family.</text>
</comment>
<protein>
    <recommendedName>
        <fullName evidence="1">S-adenosylmethionine synthase</fullName>
        <shortName evidence="1">AdoMet synthase</shortName>
        <ecNumber evidence="1">2.5.1.6</ecNumber>
    </recommendedName>
    <alternativeName>
        <fullName evidence="1">MAT</fullName>
    </alternativeName>
    <alternativeName>
        <fullName evidence="1">Methionine adenosyltransferase</fullName>
    </alternativeName>
</protein>
<gene>
    <name evidence="1" type="primary">metK</name>
    <name type="ordered locus">Reut_A0201</name>
</gene>
<proteinExistence type="inferred from homology"/>
<reference key="1">
    <citation type="journal article" date="2010" name="PLoS ONE">
        <title>The complete multipartite genome sequence of Cupriavidus necator JMP134, a versatile pollutant degrader.</title>
        <authorList>
            <person name="Lykidis A."/>
            <person name="Perez-Pantoja D."/>
            <person name="Ledger T."/>
            <person name="Mavromatis K."/>
            <person name="Anderson I.J."/>
            <person name="Ivanova N.N."/>
            <person name="Hooper S.D."/>
            <person name="Lapidus A."/>
            <person name="Lucas S."/>
            <person name="Gonzalez B."/>
            <person name="Kyrpides N.C."/>
        </authorList>
    </citation>
    <scope>NUCLEOTIDE SEQUENCE [LARGE SCALE GENOMIC DNA]</scope>
    <source>
        <strain>JMP134 / LMG 1197</strain>
    </source>
</reference>
<accession>Q476V0</accession>
<feature type="chain" id="PRO_0000241024" description="S-adenosylmethionine synthase">
    <location>
        <begin position="1"/>
        <end position="387"/>
    </location>
</feature>
<feature type="region of interest" description="Flexible loop" evidence="1">
    <location>
        <begin position="100"/>
        <end position="110"/>
    </location>
</feature>
<feature type="binding site" description="in other chain" evidence="1">
    <location>
        <position position="16"/>
    </location>
    <ligand>
        <name>ATP</name>
        <dbReference type="ChEBI" id="CHEBI:30616"/>
        <note>ligand shared between two neighboring subunits</note>
    </ligand>
</feature>
<feature type="binding site" evidence="1">
    <location>
        <position position="18"/>
    </location>
    <ligand>
        <name>Mg(2+)</name>
        <dbReference type="ChEBI" id="CHEBI:18420"/>
    </ligand>
</feature>
<feature type="binding site" evidence="1">
    <location>
        <position position="44"/>
    </location>
    <ligand>
        <name>K(+)</name>
        <dbReference type="ChEBI" id="CHEBI:29103"/>
    </ligand>
</feature>
<feature type="binding site" description="in other chain" evidence="1">
    <location>
        <position position="57"/>
    </location>
    <ligand>
        <name>L-methionine</name>
        <dbReference type="ChEBI" id="CHEBI:57844"/>
        <note>ligand shared between two neighboring subunits</note>
    </ligand>
</feature>
<feature type="binding site" description="in other chain" evidence="1">
    <location>
        <position position="100"/>
    </location>
    <ligand>
        <name>L-methionine</name>
        <dbReference type="ChEBI" id="CHEBI:57844"/>
        <note>ligand shared between two neighboring subunits</note>
    </ligand>
</feature>
<feature type="binding site" description="in other chain" evidence="1">
    <location>
        <begin position="167"/>
        <end position="169"/>
    </location>
    <ligand>
        <name>ATP</name>
        <dbReference type="ChEBI" id="CHEBI:30616"/>
        <note>ligand shared between two neighboring subunits</note>
    </ligand>
</feature>
<feature type="binding site" description="in other chain" evidence="1">
    <location>
        <begin position="232"/>
        <end position="233"/>
    </location>
    <ligand>
        <name>ATP</name>
        <dbReference type="ChEBI" id="CHEBI:30616"/>
        <note>ligand shared between two neighboring subunits</note>
    </ligand>
</feature>
<feature type="binding site" evidence="1">
    <location>
        <position position="241"/>
    </location>
    <ligand>
        <name>ATP</name>
        <dbReference type="ChEBI" id="CHEBI:30616"/>
        <note>ligand shared between two neighboring subunits</note>
    </ligand>
</feature>
<feature type="binding site" evidence="1">
    <location>
        <position position="241"/>
    </location>
    <ligand>
        <name>L-methionine</name>
        <dbReference type="ChEBI" id="CHEBI:57844"/>
        <note>ligand shared between two neighboring subunits</note>
    </ligand>
</feature>
<feature type="binding site" description="in other chain" evidence="1">
    <location>
        <begin position="247"/>
        <end position="248"/>
    </location>
    <ligand>
        <name>ATP</name>
        <dbReference type="ChEBI" id="CHEBI:30616"/>
        <note>ligand shared between two neighboring subunits</note>
    </ligand>
</feature>
<feature type="binding site" evidence="1">
    <location>
        <position position="264"/>
    </location>
    <ligand>
        <name>ATP</name>
        <dbReference type="ChEBI" id="CHEBI:30616"/>
        <note>ligand shared between two neighboring subunits</note>
    </ligand>
</feature>
<feature type="binding site" evidence="1">
    <location>
        <position position="268"/>
    </location>
    <ligand>
        <name>ATP</name>
        <dbReference type="ChEBI" id="CHEBI:30616"/>
        <note>ligand shared between two neighboring subunits</note>
    </ligand>
</feature>
<feature type="binding site" description="in other chain" evidence="1">
    <location>
        <position position="272"/>
    </location>
    <ligand>
        <name>L-methionine</name>
        <dbReference type="ChEBI" id="CHEBI:57844"/>
        <note>ligand shared between two neighboring subunits</note>
    </ligand>
</feature>
<name>METK_CUPPJ</name>
<sequence length="387" mass="42159">MANDFLFTSESVSEGHPDKVADQISDAVLDAILAQDKYARVAAETLCNTGLVVLAGEITTTANVDYIQVARDTIKRIGYDNTEYGIDYKGCAVLVAYDKQSPDIAQGVDRASDDYLNQGAGDQGLMFGYACDETPELMPFPIYYSHRLVERQSQLRRDGRLPWLRPDAKSQVTVRYVDGRPHSVDTVVLSTQHAPDITQAQIREAVIEEIIKPVLPPEMLKDTKYLVNPTGRFVIGGPQGDCGLTGRKIIVDTYGGASPHGGGAFSGKDPSKVDRSAAYAARYVAKNVVAAGLARQCQVQVSYAIGVARPINVTVYTEGTGKISDAKIAELVQEHFDLRPKGIVQMLDLLRPIYEKTAAYGHFGREEPEFSWEATDKAAILRAAAGL</sequence>
<dbReference type="EC" id="2.5.1.6" evidence="1"/>
<dbReference type="EMBL" id="CP000090">
    <property type="protein sequence ID" value="AAZ59583.1"/>
    <property type="molecule type" value="Genomic_DNA"/>
</dbReference>
<dbReference type="SMR" id="Q476V0"/>
<dbReference type="STRING" id="264198.Reut_A0201"/>
<dbReference type="KEGG" id="reu:Reut_A0201"/>
<dbReference type="eggNOG" id="COG0192">
    <property type="taxonomic scope" value="Bacteria"/>
</dbReference>
<dbReference type="HOGENOM" id="CLU_041802_1_1_4"/>
<dbReference type="OrthoDB" id="9801686at2"/>
<dbReference type="UniPathway" id="UPA00315">
    <property type="reaction ID" value="UER00080"/>
</dbReference>
<dbReference type="GO" id="GO:0005737">
    <property type="term" value="C:cytoplasm"/>
    <property type="evidence" value="ECO:0007669"/>
    <property type="project" value="UniProtKB-SubCell"/>
</dbReference>
<dbReference type="GO" id="GO:0005524">
    <property type="term" value="F:ATP binding"/>
    <property type="evidence" value="ECO:0007669"/>
    <property type="project" value="UniProtKB-UniRule"/>
</dbReference>
<dbReference type="GO" id="GO:0000287">
    <property type="term" value="F:magnesium ion binding"/>
    <property type="evidence" value="ECO:0007669"/>
    <property type="project" value="UniProtKB-UniRule"/>
</dbReference>
<dbReference type="GO" id="GO:0004478">
    <property type="term" value="F:methionine adenosyltransferase activity"/>
    <property type="evidence" value="ECO:0007669"/>
    <property type="project" value="UniProtKB-UniRule"/>
</dbReference>
<dbReference type="GO" id="GO:0006730">
    <property type="term" value="P:one-carbon metabolic process"/>
    <property type="evidence" value="ECO:0007669"/>
    <property type="project" value="UniProtKB-KW"/>
</dbReference>
<dbReference type="GO" id="GO:0006556">
    <property type="term" value="P:S-adenosylmethionine biosynthetic process"/>
    <property type="evidence" value="ECO:0007669"/>
    <property type="project" value="UniProtKB-UniRule"/>
</dbReference>
<dbReference type="CDD" id="cd18079">
    <property type="entry name" value="S-AdoMet_synt"/>
    <property type="match status" value="1"/>
</dbReference>
<dbReference type="FunFam" id="3.30.300.10:FF:000003">
    <property type="entry name" value="S-adenosylmethionine synthase"/>
    <property type="match status" value="1"/>
</dbReference>
<dbReference type="FunFam" id="3.30.300.10:FF:000004">
    <property type="entry name" value="S-adenosylmethionine synthase"/>
    <property type="match status" value="1"/>
</dbReference>
<dbReference type="Gene3D" id="3.30.300.10">
    <property type="match status" value="3"/>
</dbReference>
<dbReference type="HAMAP" id="MF_00086">
    <property type="entry name" value="S_AdoMet_synth1"/>
    <property type="match status" value="1"/>
</dbReference>
<dbReference type="InterPro" id="IPR022631">
    <property type="entry name" value="ADOMET_SYNTHASE_CS"/>
</dbReference>
<dbReference type="InterPro" id="IPR022630">
    <property type="entry name" value="S-AdoMet_synt_C"/>
</dbReference>
<dbReference type="InterPro" id="IPR022629">
    <property type="entry name" value="S-AdoMet_synt_central"/>
</dbReference>
<dbReference type="InterPro" id="IPR022628">
    <property type="entry name" value="S-AdoMet_synt_N"/>
</dbReference>
<dbReference type="InterPro" id="IPR002133">
    <property type="entry name" value="S-AdoMet_synthetase"/>
</dbReference>
<dbReference type="InterPro" id="IPR022636">
    <property type="entry name" value="S-AdoMet_synthetase_sfam"/>
</dbReference>
<dbReference type="NCBIfam" id="TIGR01034">
    <property type="entry name" value="metK"/>
    <property type="match status" value="1"/>
</dbReference>
<dbReference type="PANTHER" id="PTHR11964">
    <property type="entry name" value="S-ADENOSYLMETHIONINE SYNTHETASE"/>
    <property type="match status" value="1"/>
</dbReference>
<dbReference type="Pfam" id="PF02773">
    <property type="entry name" value="S-AdoMet_synt_C"/>
    <property type="match status" value="1"/>
</dbReference>
<dbReference type="Pfam" id="PF02772">
    <property type="entry name" value="S-AdoMet_synt_M"/>
    <property type="match status" value="1"/>
</dbReference>
<dbReference type="Pfam" id="PF00438">
    <property type="entry name" value="S-AdoMet_synt_N"/>
    <property type="match status" value="1"/>
</dbReference>
<dbReference type="PIRSF" id="PIRSF000497">
    <property type="entry name" value="MAT"/>
    <property type="match status" value="1"/>
</dbReference>
<dbReference type="SUPFAM" id="SSF55973">
    <property type="entry name" value="S-adenosylmethionine synthetase"/>
    <property type="match status" value="3"/>
</dbReference>
<dbReference type="PROSITE" id="PS00376">
    <property type="entry name" value="ADOMET_SYNTHASE_1"/>
    <property type="match status" value="1"/>
</dbReference>
<dbReference type="PROSITE" id="PS00377">
    <property type="entry name" value="ADOMET_SYNTHASE_2"/>
    <property type="match status" value="1"/>
</dbReference>
<organism>
    <name type="scientific">Cupriavidus pinatubonensis (strain JMP 134 / LMG 1197)</name>
    <name type="common">Cupriavidus necator (strain JMP 134)</name>
    <dbReference type="NCBI Taxonomy" id="264198"/>
    <lineage>
        <taxon>Bacteria</taxon>
        <taxon>Pseudomonadati</taxon>
        <taxon>Pseudomonadota</taxon>
        <taxon>Betaproteobacteria</taxon>
        <taxon>Burkholderiales</taxon>
        <taxon>Burkholderiaceae</taxon>
        <taxon>Cupriavidus</taxon>
    </lineage>
</organism>
<evidence type="ECO:0000255" key="1">
    <source>
        <dbReference type="HAMAP-Rule" id="MF_00086"/>
    </source>
</evidence>